<organism>
    <name type="scientific">Methanococcus maripaludis (strain C5 / ATCC BAA-1333)</name>
    <dbReference type="NCBI Taxonomy" id="402880"/>
    <lineage>
        <taxon>Archaea</taxon>
        <taxon>Methanobacteriati</taxon>
        <taxon>Methanobacteriota</taxon>
        <taxon>Methanomada group</taxon>
        <taxon>Methanococci</taxon>
        <taxon>Methanococcales</taxon>
        <taxon>Methanococcaceae</taxon>
        <taxon>Methanococcus</taxon>
    </lineage>
</organism>
<protein>
    <recommendedName>
        <fullName evidence="2">Probable translation initiation factor IF-2</fullName>
    </recommendedName>
</protein>
<gene>
    <name evidence="2" type="primary">infB</name>
    <name type="ordered locus">MmarC5_1389</name>
</gene>
<name>IF2P_METM5</name>
<proteinExistence type="inferred from homology"/>
<accession>A4FZQ3</accession>
<evidence type="ECO:0000250" key="1"/>
<evidence type="ECO:0000255" key="2">
    <source>
        <dbReference type="HAMAP-Rule" id="MF_00100"/>
    </source>
</evidence>
<feature type="chain" id="PRO_1000008273" description="Probable translation initiation factor IF-2">
    <location>
        <begin position="1"/>
        <end position="598"/>
    </location>
</feature>
<feature type="domain" description="tr-type G">
    <location>
        <begin position="3"/>
        <end position="225"/>
    </location>
</feature>
<feature type="region of interest" description="G1" evidence="1">
    <location>
        <begin position="12"/>
        <end position="19"/>
    </location>
</feature>
<feature type="region of interest" description="G2" evidence="1">
    <location>
        <begin position="37"/>
        <end position="41"/>
    </location>
</feature>
<feature type="region of interest" description="G3" evidence="1">
    <location>
        <begin position="76"/>
        <end position="79"/>
    </location>
</feature>
<feature type="region of interest" description="G4" evidence="1">
    <location>
        <begin position="130"/>
        <end position="133"/>
    </location>
</feature>
<feature type="region of interest" description="G5" evidence="1">
    <location>
        <begin position="200"/>
        <end position="202"/>
    </location>
</feature>
<feature type="binding site" evidence="2">
    <location>
        <begin position="12"/>
        <end position="19"/>
    </location>
    <ligand>
        <name>GTP</name>
        <dbReference type="ChEBI" id="CHEBI:37565"/>
    </ligand>
</feature>
<feature type="binding site" evidence="2">
    <location>
        <begin position="76"/>
        <end position="80"/>
    </location>
    <ligand>
        <name>GTP</name>
        <dbReference type="ChEBI" id="CHEBI:37565"/>
    </ligand>
</feature>
<feature type="binding site" evidence="2">
    <location>
        <begin position="130"/>
        <end position="133"/>
    </location>
    <ligand>
        <name>GTP</name>
        <dbReference type="ChEBI" id="CHEBI:37565"/>
    </ligand>
</feature>
<keyword id="KW-0342">GTP-binding</keyword>
<keyword id="KW-0396">Initiation factor</keyword>
<keyword id="KW-0547">Nucleotide-binding</keyword>
<keyword id="KW-0648">Protein biosynthesis</keyword>
<comment type="function">
    <text evidence="2">Function in general translation initiation by promoting the binding of the formylmethionine-tRNA to ribosomes. Seems to function along with eIF-2.</text>
</comment>
<comment type="similarity">
    <text evidence="2">Belongs to the TRAFAC class translation factor GTPase superfamily. Classic translation factor GTPase family. IF-2 subfamily.</text>
</comment>
<reference key="1">
    <citation type="submission" date="2007-03" db="EMBL/GenBank/DDBJ databases">
        <title>Complete sequence of chromosome of Methanococcus maripaludis C5.</title>
        <authorList>
            <consortium name="US DOE Joint Genome Institute"/>
            <person name="Copeland A."/>
            <person name="Lucas S."/>
            <person name="Lapidus A."/>
            <person name="Barry K."/>
            <person name="Glavina del Rio T."/>
            <person name="Dalin E."/>
            <person name="Tice H."/>
            <person name="Pitluck S."/>
            <person name="Chertkov O."/>
            <person name="Brettin T."/>
            <person name="Bruce D."/>
            <person name="Han C."/>
            <person name="Detter J.C."/>
            <person name="Schmutz J."/>
            <person name="Larimer F."/>
            <person name="Land M."/>
            <person name="Hauser L."/>
            <person name="Kyrpides N."/>
            <person name="Mikhailova N."/>
            <person name="Sieprawska-Lupa M."/>
            <person name="Whitman W.B."/>
            <person name="Richardson P."/>
        </authorList>
    </citation>
    <scope>NUCLEOTIDE SEQUENCE [LARGE SCALE GENOMIC DNA]</scope>
    <source>
        <strain>C5 / ATCC BAA-1333</strain>
    </source>
</reference>
<dbReference type="EMBL" id="CP000609">
    <property type="protein sequence ID" value="ABO35687.1"/>
    <property type="molecule type" value="Genomic_DNA"/>
</dbReference>
<dbReference type="RefSeq" id="WP_011869138.1">
    <property type="nucleotide sequence ID" value="NC_009135.1"/>
</dbReference>
<dbReference type="SMR" id="A4FZQ3"/>
<dbReference type="STRING" id="402880.MmarC5_1389"/>
<dbReference type="GeneID" id="4927565"/>
<dbReference type="KEGG" id="mmq:MmarC5_1389"/>
<dbReference type="eggNOG" id="arCOG01560">
    <property type="taxonomic scope" value="Archaea"/>
</dbReference>
<dbReference type="HOGENOM" id="CLU_002656_3_3_2"/>
<dbReference type="OrthoDB" id="30957at2157"/>
<dbReference type="Proteomes" id="UP000000253">
    <property type="component" value="Chromosome"/>
</dbReference>
<dbReference type="GO" id="GO:0005737">
    <property type="term" value="C:cytoplasm"/>
    <property type="evidence" value="ECO:0007669"/>
    <property type="project" value="TreeGrafter"/>
</dbReference>
<dbReference type="GO" id="GO:0005525">
    <property type="term" value="F:GTP binding"/>
    <property type="evidence" value="ECO:0007669"/>
    <property type="project" value="UniProtKB-KW"/>
</dbReference>
<dbReference type="GO" id="GO:0003924">
    <property type="term" value="F:GTPase activity"/>
    <property type="evidence" value="ECO:0007669"/>
    <property type="project" value="UniProtKB-UniRule"/>
</dbReference>
<dbReference type="GO" id="GO:0003743">
    <property type="term" value="F:translation initiation factor activity"/>
    <property type="evidence" value="ECO:0007669"/>
    <property type="project" value="UniProtKB-UniRule"/>
</dbReference>
<dbReference type="CDD" id="cd03703">
    <property type="entry name" value="aeIF5B_II"/>
    <property type="match status" value="1"/>
</dbReference>
<dbReference type="CDD" id="cd16266">
    <property type="entry name" value="IF2_aeIF5B_IV"/>
    <property type="match status" value="1"/>
</dbReference>
<dbReference type="CDD" id="cd01887">
    <property type="entry name" value="IF2_eIF5B"/>
    <property type="match status" value="1"/>
</dbReference>
<dbReference type="FunFam" id="3.40.50.300:FF:000112">
    <property type="entry name" value="Eukaryotic translation initiation factor 5B"/>
    <property type="match status" value="1"/>
</dbReference>
<dbReference type="FunFam" id="3.40.50.10050:FF:000001">
    <property type="entry name" value="Translation initiation factor IF-2"/>
    <property type="match status" value="1"/>
</dbReference>
<dbReference type="Gene3D" id="3.40.50.300">
    <property type="entry name" value="P-loop containing nucleotide triphosphate hydrolases"/>
    <property type="match status" value="1"/>
</dbReference>
<dbReference type="Gene3D" id="2.40.30.10">
    <property type="entry name" value="Translation factors"/>
    <property type="match status" value="2"/>
</dbReference>
<dbReference type="Gene3D" id="3.40.50.10050">
    <property type="entry name" value="Translation initiation factor IF- 2, domain 3"/>
    <property type="match status" value="1"/>
</dbReference>
<dbReference type="HAMAP" id="MF_00100_A">
    <property type="entry name" value="IF_2_A"/>
    <property type="match status" value="1"/>
</dbReference>
<dbReference type="InterPro" id="IPR029459">
    <property type="entry name" value="EFTU-type"/>
</dbReference>
<dbReference type="InterPro" id="IPR027417">
    <property type="entry name" value="P-loop_NTPase"/>
</dbReference>
<dbReference type="InterPro" id="IPR005225">
    <property type="entry name" value="Small_GTP-bd"/>
</dbReference>
<dbReference type="InterPro" id="IPR000795">
    <property type="entry name" value="T_Tr_GTP-bd_dom"/>
</dbReference>
<dbReference type="InterPro" id="IPR004544">
    <property type="entry name" value="TF_aIF-2_arc"/>
</dbReference>
<dbReference type="InterPro" id="IPR015760">
    <property type="entry name" value="TIF_IF2"/>
</dbReference>
<dbReference type="InterPro" id="IPR023115">
    <property type="entry name" value="TIF_IF2_dom3"/>
</dbReference>
<dbReference type="InterPro" id="IPR036925">
    <property type="entry name" value="TIF_IF2_dom3_sf"/>
</dbReference>
<dbReference type="InterPro" id="IPR009000">
    <property type="entry name" value="Transl_B-barrel_sf"/>
</dbReference>
<dbReference type="NCBIfam" id="TIGR00491">
    <property type="entry name" value="aIF-2"/>
    <property type="match status" value="1"/>
</dbReference>
<dbReference type="NCBIfam" id="NF003078">
    <property type="entry name" value="PRK04004.1"/>
    <property type="match status" value="1"/>
</dbReference>
<dbReference type="NCBIfam" id="NF011418">
    <property type="entry name" value="PRK14845.1"/>
    <property type="match status" value="1"/>
</dbReference>
<dbReference type="NCBIfam" id="TIGR00231">
    <property type="entry name" value="small_GTP"/>
    <property type="match status" value="1"/>
</dbReference>
<dbReference type="PANTHER" id="PTHR43381:SF4">
    <property type="entry name" value="EUKARYOTIC TRANSLATION INITIATION FACTOR 5B"/>
    <property type="match status" value="1"/>
</dbReference>
<dbReference type="PANTHER" id="PTHR43381">
    <property type="entry name" value="TRANSLATION INITIATION FACTOR IF-2-RELATED"/>
    <property type="match status" value="1"/>
</dbReference>
<dbReference type="Pfam" id="PF00009">
    <property type="entry name" value="GTP_EFTU"/>
    <property type="match status" value="1"/>
</dbReference>
<dbReference type="Pfam" id="PF14578">
    <property type="entry name" value="GTP_EFTU_D4"/>
    <property type="match status" value="1"/>
</dbReference>
<dbReference type="Pfam" id="PF11987">
    <property type="entry name" value="IF-2"/>
    <property type="match status" value="1"/>
</dbReference>
<dbReference type="PRINTS" id="PR00315">
    <property type="entry name" value="ELONGATNFCT"/>
</dbReference>
<dbReference type="SUPFAM" id="SSF52156">
    <property type="entry name" value="Initiation factor IF2/eIF5b, domain 3"/>
    <property type="match status" value="1"/>
</dbReference>
<dbReference type="SUPFAM" id="SSF52540">
    <property type="entry name" value="P-loop containing nucleoside triphosphate hydrolases"/>
    <property type="match status" value="1"/>
</dbReference>
<dbReference type="SUPFAM" id="SSF50447">
    <property type="entry name" value="Translation proteins"/>
    <property type="match status" value="1"/>
</dbReference>
<dbReference type="PROSITE" id="PS51722">
    <property type="entry name" value="G_TR_2"/>
    <property type="match status" value="1"/>
</dbReference>
<sequence>MALRCPIVSVLGHVDHGKTSLLDKIRRTRVTQREAGGITQHIGASEIPINTIKKVSKDLLGLFKADLSIPGILVIDTPGHEAFTSLRKRGGALADIAILVVDINEGFKPQTIEAINILKQCKTPFIVAANKVDRIPGWNSSEGPFILNFNEKNQHPNAMTEFEIRLYENIIKHLNELGFDADLFSRVKDTTKTINVVPVSAMTGEGVPDLLVIISGLAQKFLEQKLALNVEGYAKGTVLELKEEKGLGKTIDAIIYDGIAKTGDFLVVGNPDGVIVSKIKALLKPKELDEMRDPKDKFKPSKQISAATGVKISAPDLDSVIAGSPLRIVPKNQVDAAKEEVLQEVEEFTILTDDEGIIIKADTMGSLEALANELRKVNAKIKKAEVGDISKKDVIEASSYASSNPLNGLIISFNTKVLADAKAEIEKSDVKLLEGKIIYKLVEEYEEWTKEMEELMKSDEINRLTKPAMIKILPNCIFRQKEPAVCGVEVLYGTLKIGSPIMSEDGKKLGYVKEMRDSQQENIKEAKVGMQVPVSIDGNIVLGRNAKENDILYVEVPEPEARKLHHEFKDELRGDEKEALSRYMELKQKIENNIFWGM</sequence>